<comment type="function">
    <text evidence="1">Part of the high-affinity ATP-driven potassium transport (or Kdp) system, which catalyzes the hydrolysis of ATP coupled with the electrogenic transport of potassium into the cytoplasm. This subunit acts as a catalytic chaperone that increases the ATP-binding affinity of the ATP-hydrolyzing subunit KdpB by the formation of a transient KdpB/KdpC/ATP ternary complex.</text>
</comment>
<comment type="subunit">
    <text evidence="1">The system is composed of three essential subunits: KdpA, KdpB and KdpC.</text>
</comment>
<comment type="subcellular location">
    <subcellularLocation>
        <location evidence="1">Cell inner membrane</location>
        <topology evidence="1">Single-pass membrane protein</topology>
    </subcellularLocation>
</comment>
<comment type="similarity">
    <text evidence="1">Belongs to the KdpC family.</text>
</comment>
<name>KDPC_SALHS</name>
<proteinExistence type="inferred from homology"/>
<gene>
    <name evidence="1" type="primary">kdpC</name>
    <name type="ordered locus">SeHA_C0826</name>
</gene>
<protein>
    <recommendedName>
        <fullName evidence="1">Potassium-transporting ATPase KdpC subunit</fullName>
    </recommendedName>
    <alternativeName>
        <fullName evidence="1">ATP phosphohydrolase [potassium-transporting] C chain</fullName>
    </alternativeName>
    <alternativeName>
        <fullName evidence="1">Potassium-binding and translocating subunit C</fullName>
    </alternativeName>
    <alternativeName>
        <fullName evidence="1">Potassium-translocating ATPase C chain</fullName>
    </alternativeName>
</protein>
<sequence>MIGLRPAFSTMLFLLLLTGGVYPLLTTALGQWWFPWQANGSLIHKDNVIRGSALIGQSFTAAGYFHGRPSATADTPYNPLASGGSNLAASNPELDAQIQARVAALRAANPQASSAVPVELATASASGLDNNLTPGAAAWQIPRVAAARQLPVEQVAQLVAEYTHRPLASFLGQPVVNIVELNLALDALQGHRAK</sequence>
<feature type="chain" id="PRO_1000114741" description="Potassium-transporting ATPase KdpC subunit">
    <location>
        <begin position="1"/>
        <end position="194"/>
    </location>
</feature>
<feature type="transmembrane region" description="Helical" evidence="1">
    <location>
        <begin position="12"/>
        <end position="34"/>
    </location>
</feature>
<evidence type="ECO:0000255" key="1">
    <source>
        <dbReference type="HAMAP-Rule" id="MF_00276"/>
    </source>
</evidence>
<dbReference type="EMBL" id="CP001120">
    <property type="protein sequence ID" value="ACF67701.1"/>
    <property type="molecule type" value="Genomic_DNA"/>
</dbReference>
<dbReference type="RefSeq" id="WP_001531408.1">
    <property type="nucleotide sequence ID" value="NC_011083.1"/>
</dbReference>
<dbReference type="SMR" id="B4TBA5"/>
<dbReference type="KEGG" id="seh:SeHA_C0826"/>
<dbReference type="HOGENOM" id="CLU_077094_2_0_6"/>
<dbReference type="Proteomes" id="UP000001866">
    <property type="component" value="Chromosome"/>
</dbReference>
<dbReference type="GO" id="GO:0005886">
    <property type="term" value="C:plasma membrane"/>
    <property type="evidence" value="ECO:0007669"/>
    <property type="project" value="UniProtKB-SubCell"/>
</dbReference>
<dbReference type="GO" id="GO:0005524">
    <property type="term" value="F:ATP binding"/>
    <property type="evidence" value="ECO:0007669"/>
    <property type="project" value="UniProtKB-UniRule"/>
</dbReference>
<dbReference type="GO" id="GO:0008556">
    <property type="term" value="F:P-type potassium transmembrane transporter activity"/>
    <property type="evidence" value="ECO:0007669"/>
    <property type="project" value="InterPro"/>
</dbReference>
<dbReference type="HAMAP" id="MF_00276">
    <property type="entry name" value="KdpC"/>
    <property type="match status" value="1"/>
</dbReference>
<dbReference type="InterPro" id="IPR003820">
    <property type="entry name" value="KdpC"/>
</dbReference>
<dbReference type="NCBIfam" id="TIGR00681">
    <property type="entry name" value="kdpC"/>
    <property type="match status" value="1"/>
</dbReference>
<dbReference type="NCBIfam" id="NF001454">
    <property type="entry name" value="PRK00315.1"/>
    <property type="match status" value="1"/>
</dbReference>
<dbReference type="PANTHER" id="PTHR30042">
    <property type="entry name" value="POTASSIUM-TRANSPORTING ATPASE C CHAIN"/>
    <property type="match status" value="1"/>
</dbReference>
<dbReference type="PANTHER" id="PTHR30042:SF2">
    <property type="entry name" value="POTASSIUM-TRANSPORTING ATPASE KDPC SUBUNIT"/>
    <property type="match status" value="1"/>
</dbReference>
<dbReference type="Pfam" id="PF02669">
    <property type="entry name" value="KdpC"/>
    <property type="match status" value="1"/>
</dbReference>
<dbReference type="PIRSF" id="PIRSF001296">
    <property type="entry name" value="K_ATPase_KdpC"/>
    <property type="match status" value="1"/>
</dbReference>
<keyword id="KW-0067">ATP-binding</keyword>
<keyword id="KW-0997">Cell inner membrane</keyword>
<keyword id="KW-1003">Cell membrane</keyword>
<keyword id="KW-0406">Ion transport</keyword>
<keyword id="KW-0472">Membrane</keyword>
<keyword id="KW-0547">Nucleotide-binding</keyword>
<keyword id="KW-0630">Potassium</keyword>
<keyword id="KW-0633">Potassium transport</keyword>
<keyword id="KW-0812">Transmembrane</keyword>
<keyword id="KW-1133">Transmembrane helix</keyword>
<keyword id="KW-0813">Transport</keyword>
<accession>B4TBA5</accession>
<reference key="1">
    <citation type="journal article" date="2011" name="J. Bacteriol.">
        <title>Comparative genomics of 28 Salmonella enterica isolates: evidence for CRISPR-mediated adaptive sublineage evolution.</title>
        <authorList>
            <person name="Fricke W.F."/>
            <person name="Mammel M.K."/>
            <person name="McDermott P.F."/>
            <person name="Tartera C."/>
            <person name="White D.G."/>
            <person name="Leclerc J.E."/>
            <person name="Ravel J."/>
            <person name="Cebula T.A."/>
        </authorList>
    </citation>
    <scope>NUCLEOTIDE SEQUENCE [LARGE SCALE GENOMIC DNA]</scope>
    <source>
        <strain>SL476</strain>
    </source>
</reference>
<organism>
    <name type="scientific">Salmonella heidelberg (strain SL476)</name>
    <dbReference type="NCBI Taxonomy" id="454169"/>
    <lineage>
        <taxon>Bacteria</taxon>
        <taxon>Pseudomonadati</taxon>
        <taxon>Pseudomonadota</taxon>
        <taxon>Gammaproteobacteria</taxon>
        <taxon>Enterobacterales</taxon>
        <taxon>Enterobacteriaceae</taxon>
        <taxon>Salmonella</taxon>
    </lineage>
</organism>